<name>CS044_HUMAN</name>
<gene>
    <name type="primary">C19orf44</name>
</gene>
<feature type="chain" id="PRO_0000291921" description="Uncharacterized protein C19orf44">
    <location>
        <begin position="1"/>
        <end position="657"/>
    </location>
</feature>
<feature type="region of interest" description="Disordered" evidence="2">
    <location>
        <begin position="142"/>
        <end position="216"/>
    </location>
</feature>
<feature type="region of interest" description="Disordered" evidence="2">
    <location>
        <begin position="228"/>
        <end position="248"/>
    </location>
</feature>
<feature type="region of interest" description="Disordered" evidence="2">
    <location>
        <begin position="291"/>
        <end position="312"/>
    </location>
</feature>
<feature type="region of interest" description="Disordered" evidence="2">
    <location>
        <begin position="335"/>
        <end position="354"/>
    </location>
</feature>
<feature type="region of interest" description="Disordered" evidence="2">
    <location>
        <begin position="399"/>
        <end position="522"/>
    </location>
</feature>
<feature type="compositionally biased region" description="Polar residues" evidence="2">
    <location>
        <begin position="143"/>
        <end position="169"/>
    </location>
</feature>
<feature type="compositionally biased region" description="Basic and acidic residues" evidence="2">
    <location>
        <begin position="190"/>
        <end position="206"/>
    </location>
</feature>
<feature type="compositionally biased region" description="Polar residues" evidence="2">
    <location>
        <begin position="234"/>
        <end position="243"/>
    </location>
</feature>
<feature type="compositionally biased region" description="Polar residues" evidence="2">
    <location>
        <begin position="301"/>
        <end position="312"/>
    </location>
</feature>
<feature type="compositionally biased region" description="Acidic residues" evidence="2">
    <location>
        <begin position="343"/>
        <end position="354"/>
    </location>
</feature>
<feature type="compositionally biased region" description="Low complexity" evidence="2">
    <location>
        <begin position="437"/>
        <end position="451"/>
    </location>
</feature>
<feature type="compositionally biased region" description="Polar residues" evidence="2">
    <location>
        <begin position="462"/>
        <end position="484"/>
    </location>
</feature>
<feature type="compositionally biased region" description="Basic and acidic residues" evidence="2">
    <location>
        <begin position="485"/>
        <end position="495"/>
    </location>
</feature>
<feature type="compositionally biased region" description="Polar residues" evidence="2">
    <location>
        <begin position="499"/>
        <end position="513"/>
    </location>
</feature>
<feature type="modified residue" description="Phosphoserine" evidence="4">
    <location>
        <position position="114"/>
    </location>
</feature>
<feature type="modified residue" description="Phosphoserine" evidence="1">
    <location>
        <position position="213"/>
    </location>
</feature>
<feature type="splice variant" id="VSP_026311" description="In isoform 2." evidence="3">
    <original>LTAYSPAVLALHDVLKQQLSLTQQFIQASRHLHASLLRSLDADSFHYHTLEEAKEYIRCHRPAPLTMEDALEEVNKEL</original>
    <variation>AEPDAAVHPGQPAPARLPPALPGRGLLPLPHPGGSQRVH</variation>
    <location>
        <begin position="580"/>
        <end position="657"/>
    </location>
</feature>
<accession>Q9H6X5</accession>
<accession>Q8N6Y7</accession>
<proteinExistence type="evidence at protein level"/>
<reference key="1">
    <citation type="journal article" date="2004" name="Nat. Genet.">
        <title>Complete sequencing and characterization of 21,243 full-length human cDNAs.</title>
        <authorList>
            <person name="Ota T."/>
            <person name="Suzuki Y."/>
            <person name="Nishikawa T."/>
            <person name="Otsuki T."/>
            <person name="Sugiyama T."/>
            <person name="Irie R."/>
            <person name="Wakamatsu A."/>
            <person name="Hayashi K."/>
            <person name="Sato H."/>
            <person name="Nagai K."/>
            <person name="Kimura K."/>
            <person name="Makita H."/>
            <person name="Sekine M."/>
            <person name="Obayashi M."/>
            <person name="Nishi T."/>
            <person name="Shibahara T."/>
            <person name="Tanaka T."/>
            <person name="Ishii S."/>
            <person name="Yamamoto J."/>
            <person name="Saito K."/>
            <person name="Kawai Y."/>
            <person name="Isono Y."/>
            <person name="Nakamura Y."/>
            <person name="Nagahari K."/>
            <person name="Murakami K."/>
            <person name="Yasuda T."/>
            <person name="Iwayanagi T."/>
            <person name="Wagatsuma M."/>
            <person name="Shiratori A."/>
            <person name="Sudo H."/>
            <person name="Hosoiri T."/>
            <person name="Kaku Y."/>
            <person name="Kodaira H."/>
            <person name="Kondo H."/>
            <person name="Sugawara M."/>
            <person name="Takahashi M."/>
            <person name="Kanda K."/>
            <person name="Yokoi T."/>
            <person name="Furuya T."/>
            <person name="Kikkawa E."/>
            <person name="Omura Y."/>
            <person name="Abe K."/>
            <person name="Kamihara K."/>
            <person name="Katsuta N."/>
            <person name="Sato K."/>
            <person name="Tanikawa M."/>
            <person name="Yamazaki M."/>
            <person name="Ninomiya K."/>
            <person name="Ishibashi T."/>
            <person name="Yamashita H."/>
            <person name="Murakawa K."/>
            <person name="Fujimori K."/>
            <person name="Tanai H."/>
            <person name="Kimata M."/>
            <person name="Watanabe M."/>
            <person name="Hiraoka S."/>
            <person name="Chiba Y."/>
            <person name="Ishida S."/>
            <person name="Ono Y."/>
            <person name="Takiguchi S."/>
            <person name="Watanabe S."/>
            <person name="Yosida M."/>
            <person name="Hotuta T."/>
            <person name="Kusano J."/>
            <person name="Kanehori K."/>
            <person name="Takahashi-Fujii A."/>
            <person name="Hara H."/>
            <person name="Tanase T.-O."/>
            <person name="Nomura Y."/>
            <person name="Togiya S."/>
            <person name="Komai F."/>
            <person name="Hara R."/>
            <person name="Takeuchi K."/>
            <person name="Arita M."/>
            <person name="Imose N."/>
            <person name="Musashino K."/>
            <person name="Yuuki H."/>
            <person name="Oshima A."/>
            <person name="Sasaki N."/>
            <person name="Aotsuka S."/>
            <person name="Yoshikawa Y."/>
            <person name="Matsunawa H."/>
            <person name="Ichihara T."/>
            <person name="Shiohata N."/>
            <person name="Sano S."/>
            <person name="Moriya S."/>
            <person name="Momiyama H."/>
            <person name="Satoh N."/>
            <person name="Takami S."/>
            <person name="Terashima Y."/>
            <person name="Suzuki O."/>
            <person name="Nakagawa S."/>
            <person name="Senoh A."/>
            <person name="Mizoguchi H."/>
            <person name="Goto Y."/>
            <person name="Shimizu F."/>
            <person name="Wakebe H."/>
            <person name="Hishigaki H."/>
            <person name="Watanabe T."/>
            <person name="Sugiyama A."/>
            <person name="Takemoto M."/>
            <person name="Kawakami B."/>
            <person name="Yamazaki M."/>
            <person name="Watanabe K."/>
            <person name="Kumagai A."/>
            <person name="Itakura S."/>
            <person name="Fukuzumi Y."/>
            <person name="Fujimori Y."/>
            <person name="Komiyama M."/>
            <person name="Tashiro H."/>
            <person name="Tanigami A."/>
            <person name="Fujiwara T."/>
            <person name="Ono T."/>
            <person name="Yamada K."/>
            <person name="Fujii Y."/>
            <person name="Ozaki K."/>
            <person name="Hirao M."/>
            <person name="Ohmori Y."/>
            <person name="Kawabata A."/>
            <person name="Hikiji T."/>
            <person name="Kobatake N."/>
            <person name="Inagaki H."/>
            <person name="Ikema Y."/>
            <person name="Okamoto S."/>
            <person name="Okitani R."/>
            <person name="Kawakami T."/>
            <person name="Noguchi S."/>
            <person name="Itoh T."/>
            <person name="Shigeta K."/>
            <person name="Senba T."/>
            <person name="Matsumura K."/>
            <person name="Nakajima Y."/>
            <person name="Mizuno T."/>
            <person name="Morinaga M."/>
            <person name="Sasaki M."/>
            <person name="Togashi T."/>
            <person name="Oyama M."/>
            <person name="Hata H."/>
            <person name="Watanabe M."/>
            <person name="Komatsu T."/>
            <person name="Mizushima-Sugano J."/>
            <person name="Satoh T."/>
            <person name="Shirai Y."/>
            <person name="Takahashi Y."/>
            <person name="Nakagawa K."/>
            <person name="Okumura K."/>
            <person name="Nagase T."/>
            <person name="Nomura N."/>
            <person name="Kikuchi H."/>
            <person name="Masuho Y."/>
            <person name="Yamashita R."/>
            <person name="Nakai K."/>
            <person name="Yada T."/>
            <person name="Nakamura Y."/>
            <person name="Ohara O."/>
            <person name="Isogai T."/>
            <person name="Sugano S."/>
        </authorList>
    </citation>
    <scope>NUCLEOTIDE SEQUENCE [LARGE SCALE MRNA] (ISOFORM 1)</scope>
    <source>
        <tissue>Colon mucosa</tissue>
    </source>
</reference>
<reference key="2">
    <citation type="journal article" date="2004" name="Genome Res.">
        <title>The status, quality, and expansion of the NIH full-length cDNA project: the Mammalian Gene Collection (MGC).</title>
        <authorList>
            <consortium name="The MGC Project Team"/>
        </authorList>
    </citation>
    <scope>NUCLEOTIDE SEQUENCE [LARGE SCALE MRNA] (ISOFORM 2)</scope>
    <source>
        <tissue>Lung</tissue>
    </source>
</reference>
<reference key="3">
    <citation type="journal article" date="2013" name="J. Proteome Res.">
        <title>Toward a comprehensive characterization of a human cancer cell phosphoproteome.</title>
        <authorList>
            <person name="Zhou H."/>
            <person name="Di Palma S."/>
            <person name="Preisinger C."/>
            <person name="Peng M."/>
            <person name="Polat A.N."/>
            <person name="Heck A.J."/>
            <person name="Mohammed S."/>
        </authorList>
    </citation>
    <scope>PHOSPHORYLATION [LARGE SCALE ANALYSIS] AT SER-114</scope>
    <scope>IDENTIFICATION BY MASS SPECTROMETRY [LARGE SCALE ANALYSIS]</scope>
    <source>
        <tissue>Erythroleukemia</tissue>
    </source>
</reference>
<evidence type="ECO:0000250" key="1">
    <source>
        <dbReference type="UniProtKB" id="Q6AXP1"/>
    </source>
</evidence>
<evidence type="ECO:0000256" key="2">
    <source>
        <dbReference type="SAM" id="MobiDB-lite"/>
    </source>
</evidence>
<evidence type="ECO:0000303" key="3">
    <source>
    </source>
</evidence>
<evidence type="ECO:0007744" key="4">
    <source>
    </source>
</evidence>
<keyword id="KW-0025">Alternative splicing</keyword>
<keyword id="KW-0597">Phosphoprotein</keyword>
<keyword id="KW-1267">Proteomics identification</keyword>
<keyword id="KW-1185">Reference proteome</keyword>
<organism>
    <name type="scientific">Homo sapiens</name>
    <name type="common">Human</name>
    <dbReference type="NCBI Taxonomy" id="9606"/>
    <lineage>
        <taxon>Eukaryota</taxon>
        <taxon>Metazoa</taxon>
        <taxon>Chordata</taxon>
        <taxon>Craniata</taxon>
        <taxon>Vertebrata</taxon>
        <taxon>Euteleostomi</taxon>
        <taxon>Mammalia</taxon>
        <taxon>Eutheria</taxon>
        <taxon>Euarchontoglires</taxon>
        <taxon>Primates</taxon>
        <taxon>Haplorrhini</taxon>
        <taxon>Catarrhini</taxon>
        <taxon>Hominidae</taxon>
        <taxon>Homo</taxon>
    </lineage>
</organism>
<comment type="interaction">
    <interactant intactId="EBI-7112211">
        <id>Q9H6X5</id>
    </interactant>
    <interactant intactId="EBI-741724">
        <id>Q8NA61</id>
        <label>CBY2</label>
    </interactant>
    <organismsDiffer>false</organismsDiffer>
    <experiments>3</experiments>
</comment>
<comment type="interaction">
    <interactant intactId="EBI-12061599">
        <id>Q9H6X5-2</id>
    </interactant>
    <interactant intactId="EBI-11524851">
        <id>Q8NA61-2</id>
        <label>CBY2</label>
    </interactant>
    <organismsDiffer>false</organismsDiffer>
    <experiments>3</experiments>
</comment>
<comment type="interaction">
    <interactant intactId="EBI-12061599">
        <id>Q9H6X5-2</id>
    </interactant>
    <interactant intactId="EBI-10961624">
        <id>Q2TAC2-2</id>
        <label>CCDC57</label>
    </interactant>
    <organismsDiffer>false</organismsDiffer>
    <experiments>3</experiments>
</comment>
<comment type="interaction">
    <interactant intactId="EBI-12061599">
        <id>Q9H6X5-2</id>
    </interactant>
    <interactant intactId="EBI-349105">
        <id>P63167</id>
        <label>DYNLL1</label>
    </interactant>
    <organismsDiffer>false</organismsDiffer>
    <experiments>5</experiments>
</comment>
<comment type="interaction">
    <interactant intactId="EBI-12061599">
        <id>Q9H6X5-2</id>
    </interactant>
    <interactant intactId="EBI-618309">
        <id>Q08379</id>
        <label>GOLGA2</label>
    </interactant>
    <organismsDiffer>false</organismsDiffer>
    <experiments>3</experiments>
</comment>
<comment type="interaction">
    <interactant intactId="EBI-12061599">
        <id>Q9H6X5-2</id>
    </interactant>
    <interactant intactId="EBI-749311">
        <id>P37235</id>
        <label>HPCAL1</label>
    </interactant>
    <organismsDiffer>false</organismsDiffer>
    <experiments>4</experiments>
</comment>
<comment type="interaction">
    <interactant intactId="EBI-12061599">
        <id>Q9H6X5-2</id>
    </interactant>
    <interactant intactId="EBI-954040">
        <id>Q92845</id>
        <label>KIFAP3</label>
    </interactant>
    <organismsDiffer>false</organismsDiffer>
    <experiments>3</experiments>
</comment>
<comment type="interaction">
    <interactant intactId="EBI-12061599">
        <id>Q9H6X5-2</id>
    </interactant>
    <interactant intactId="EBI-3044087">
        <id>Q7Z3Y8</id>
        <label>KRT27</label>
    </interactant>
    <organismsDiffer>false</organismsDiffer>
    <experiments>3</experiments>
</comment>
<comment type="interaction">
    <interactant intactId="EBI-12061599">
        <id>Q9H6X5-2</id>
    </interactant>
    <interactant intactId="EBI-11522433">
        <id>Q5JR59-3</id>
        <label>MTUS2</label>
    </interactant>
    <organismsDiffer>false</organismsDiffer>
    <experiments>3</experiments>
</comment>
<comment type="interaction">
    <interactant intactId="EBI-12061599">
        <id>Q9H6X5-2</id>
    </interactant>
    <interactant intactId="EBI-749635">
        <id>P61601</id>
        <label>NCALD</label>
    </interactant>
    <organismsDiffer>false</organismsDiffer>
    <experiments>3</experiments>
</comment>
<comment type="interaction">
    <interactant intactId="EBI-12061599">
        <id>Q9H6X5-2</id>
    </interactant>
    <interactant intactId="EBI-726876">
        <id>Q6NUQ1</id>
        <label>RINT1</label>
    </interactant>
    <organismsDiffer>false</organismsDiffer>
    <experiments>3</experiments>
</comment>
<comment type="alternative products">
    <event type="alternative splicing"/>
    <isoform>
        <id>Q9H6X5-1</id>
        <name>1</name>
        <sequence type="displayed"/>
    </isoform>
    <isoform>
        <id>Q9H6X5-2</id>
        <name>2</name>
        <sequence type="described" ref="VSP_026311"/>
    </isoform>
</comment>
<dbReference type="EMBL" id="AK025395">
    <property type="protein sequence ID" value="BAB15125.1"/>
    <property type="molecule type" value="mRNA"/>
</dbReference>
<dbReference type="EMBL" id="BC027869">
    <property type="protein sequence ID" value="AAH27869.1"/>
    <property type="molecule type" value="mRNA"/>
</dbReference>
<dbReference type="CCDS" id="CCDS12345.1">
    <molecule id="Q9H6X5-1"/>
</dbReference>
<dbReference type="RefSeq" id="NP_115583.1">
    <molecule id="Q9H6X5-1"/>
    <property type="nucleotide sequence ID" value="NM_032207.4"/>
</dbReference>
<dbReference type="RefSeq" id="XP_011526656.1">
    <molecule id="Q9H6X5-1"/>
    <property type="nucleotide sequence ID" value="XM_011528354.4"/>
</dbReference>
<dbReference type="RefSeq" id="XP_054178288.1">
    <molecule id="Q9H6X5-1"/>
    <property type="nucleotide sequence ID" value="XM_054322313.1"/>
</dbReference>
<dbReference type="SMR" id="Q9H6X5"/>
<dbReference type="BioGRID" id="123923">
    <property type="interactions" value="29"/>
</dbReference>
<dbReference type="FunCoup" id="Q9H6X5">
    <property type="interactions" value="607"/>
</dbReference>
<dbReference type="IntAct" id="Q9H6X5">
    <property type="interactions" value="19"/>
</dbReference>
<dbReference type="MINT" id="Q9H6X5"/>
<dbReference type="STRING" id="9606.ENSP00000221671"/>
<dbReference type="GlyGen" id="Q9H6X5">
    <property type="glycosylation" value="1 site"/>
</dbReference>
<dbReference type="iPTMnet" id="Q9H6X5"/>
<dbReference type="PhosphoSitePlus" id="Q9H6X5"/>
<dbReference type="BioMuta" id="C19orf44"/>
<dbReference type="DMDM" id="74718575"/>
<dbReference type="jPOST" id="Q9H6X5"/>
<dbReference type="MassIVE" id="Q9H6X5"/>
<dbReference type="PaxDb" id="9606-ENSP00000221671"/>
<dbReference type="PeptideAtlas" id="Q9H6X5"/>
<dbReference type="ProteomicsDB" id="81055">
    <molecule id="Q9H6X5-1"/>
</dbReference>
<dbReference type="ProteomicsDB" id="81056">
    <molecule id="Q9H6X5-2"/>
</dbReference>
<dbReference type="Pumba" id="Q9H6X5"/>
<dbReference type="Antibodypedia" id="51085">
    <property type="antibodies" value="57 antibodies from 16 providers"/>
</dbReference>
<dbReference type="DNASU" id="84167"/>
<dbReference type="Ensembl" id="ENST00000221671.8">
    <molecule id="Q9H6X5-1"/>
    <property type="protein sequence ID" value="ENSP00000221671.2"/>
    <property type="gene ID" value="ENSG00000105072.9"/>
</dbReference>
<dbReference type="Ensembl" id="ENST00000593380.1">
    <molecule id="Q9H6X5-2"/>
    <property type="protein sequence ID" value="ENSP00000472255.1"/>
    <property type="gene ID" value="ENSG00000105072.9"/>
</dbReference>
<dbReference type="GeneID" id="84167"/>
<dbReference type="KEGG" id="hsa:84167"/>
<dbReference type="MANE-Select" id="ENST00000221671.8">
    <property type="protein sequence ID" value="ENSP00000221671.2"/>
    <property type="RefSeq nucleotide sequence ID" value="NM_032207.4"/>
    <property type="RefSeq protein sequence ID" value="NP_115583.1"/>
</dbReference>
<dbReference type="UCSC" id="uc002neh.3">
    <molecule id="Q9H6X5-1"/>
    <property type="organism name" value="human"/>
</dbReference>
<dbReference type="AGR" id="HGNC:26141"/>
<dbReference type="CTD" id="84167"/>
<dbReference type="DisGeNET" id="84167"/>
<dbReference type="GeneCards" id="C19orf44"/>
<dbReference type="HGNC" id="HGNC:26141">
    <property type="gene designation" value="C19orf44"/>
</dbReference>
<dbReference type="HPA" id="ENSG00000105072">
    <property type="expression patterns" value="Low tissue specificity"/>
</dbReference>
<dbReference type="MalaCards" id="C19orf44"/>
<dbReference type="neXtProt" id="NX_Q9H6X5"/>
<dbReference type="OpenTargets" id="ENSG00000105072"/>
<dbReference type="PharmGKB" id="PA145149498"/>
<dbReference type="VEuPathDB" id="HostDB:ENSG00000105072"/>
<dbReference type="eggNOG" id="ENOG502RMHR">
    <property type="taxonomic scope" value="Eukaryota"/>
</dbReference>
<dbReference type="GeneTree" id="ENSGT00390000002505"/>
<dbReference type="HOGENOM" id="CLU_028158_0_0_1"/>
<dbReference type="InParanoid" id="Q9H6X5"/>
<dbReference type="OMA" id="FKINVMT"/>
<dbReference type="OrthoDB" id="2151530at2759"/>
<dbReference type="PAN-GO" id="Q9H6X5">
    <property type="GO annotations" value="0 GO annotations based on evolutionary models"/>
</dbReference>
<dbReference type="PhylomeDB" id="Q9H6X5"/>
<dbReference type="TreeFam" id="TF330762"/>
<dbReference type="PathwayCommons" id="Q9H6X5"/>
<dbReference type="SignaLink" id="Q9H6X5"/>
<dbReference type="BioGRID-ORCS" id="84167">
    <property type="hits" value="16 hits in 1128 CRISPR screens"/>
</dbReference>
<dbReference type="ChiTaRS" id="C19orf44">
    <property type="organism name" value="human"/>
</dbReference>
<dbReference type="GenomeRNAi" id="84167"/>
<dbReference type="Pharos" id="Q9H6X5">
    <property type="development level" value="Tdark"/>
</dbReference>
<dbReference type="PRO" id="PR:Q9H6X5"/>
<dbReference type="Proteomes" id="UP000005640">
    <property type="component" value="Chromosome 19"/>
</dbReference>
<dbReference type="RNAct" id="Q9H6X5">
    <property type="molecule type" value="protein"/>
</dbReference>
<dbReference type="Bgee" id="ENSG00000105072">
    <property type="expression patterns" value="Expressed in oviduct epithelium and 100 other cell types or tissues"/>
</dbReference>
<dbReference type="ExpressionAtlas" id="Q9H6X5">
    <property type="expression patterns" value="baseline and differential"/>
</dbReference>
<dbReference type="InterPro" id="IPR040120">
    <property type="entry name" value="C19orf44-like"/>
</dbReference>
<dbReference type="InterPro" id="IPR027884">
    <property type="entry name" value="DUF4614"/>
</dbReference>
<dbReference type="PANTHER" id="PTHR22409">
    <property type="entry name" value="CHROMOSOME 19 OPEN READING FRAME 44"/>
    <property type="match status" value="1"/>
</dbReference>
<dbReference type="PANTHER" id="PTHR22409:SF2">
    <property type="entry name" value="CHROMOSOME 19 OPEN READING FRAME 44"/>
    <property type="match status" value="1"/>
</dbReference>
<dbReference type="Pfam" id="PF15391">
    <property type="entry name" value="DUF4614"/>
    <property type="match status" value="1"/>
</dbReference>
<sequence length="657" mass="71343">MASARKASRPMRDVFGDFSDVSLEDSTMEEIRNFQISRNLTKIAPGHSRFLKRNQTLDEKHLLLKENPVLGSGPRLASCRPPTTASRIRANAALMKLAQLETRIMNRKLQRNLSDTESDSMTADAGLPKRADRILSGGALELASQNTDKTSQNQARELPVTENNAQNAKVSRFLKKKQAPVENISPEAPAGKERTLQTPKQKEPARTFDSPDSDEEEMKVLLGSLMDSSREKNTNQGFSSANVSEEEERKLFSVPSQLRAFTVPSVELSSAKPSQTSHLPTSLAADRTLHSTRSRADYPQSHVSSDTASHTPSVSITGAFSNSVSLKMGHVKLVSSPGRSEAETVDEPVSEGADDSLDEFRINILSLDGLAPAVSENSDLEQEEESAQRQKTAGKIFRAEASTGQDAPRQAQARSWASQGKAASAEGDESEVSEHLSASSASAIQQDSTSSMQPPSEAPMVNTVSSAYSEDFENSPSLTASEPTAHSKESLDRTLDALSESSSSVKTDLPQTAESRKKSGRHVTRVLVKDTAVQTPDPAFTYEWTKVASMAAMGPALGGAYVDPTPIANHVISADAIEALTAYSPAVLALHDVLKQQLSLTQQFIQASRHLHASLLRSLDADSFHYHTLEEAKEYIRCHRPAPLTMEDALEEVNKEL</sequence>
<protein>
    <recommendedName>
        <fullName>Uncharacterized protein C19orf44</fullName>
    </recommendedName>
</protein>